<evidence type="ECO:0000255" key="1"/>
<evidence type="ECO:0000269" key="2">
    <source>
    </source>
</evidence>
<evidence type="ECO:0000305" key="3"/>
<protein>
    <recommendedName>
        <fullName>Terminal beta-(1-&gt;2)-arabinofuranosyltransferase</fullName>
        <ecNumber>2.4.2.-</ecNumber>
    </recommendedName>
</protein>
<accession>O53582</accession>
<accession>F2GDG4</accession>
<accession>L0TDU7</accession>
<organism>
    <name type="scientific">Mycobacterium tuberculosis (strain ATCC 25618 / H37Rv)</name>
    <dbReference type="NCBI Taxonomy" id="83332"/>
    <lineage>
        <taxon>Bacteria</taxon>
        <taxon>Bacillati</taxon>
        <taxon>Actinomycetota</taxon>
        <taxon>Actinomycetes</taxon>
        <taxon>Mycobacteriales</taxon>
        <taxon>Mycobacteriaceae</taxon>
        <taxon>Mycobacterium</taxon>
        <taxon>Mycobacterium tuberculosis complex</taxon>
    </lineage>
</organism>
<proteinExistence type="evidence at protein level"/>
<comment type="function">
    <text evidence="2">Involved in the biosynthesis of the arabinogalactan (AG) region of the mycolylarabinogalactan-peptidoglycan (mAGP) complex, an essential component of the mycobacterial cell wall. Catalyzes the transfer of arabinofuranosyl (Araf) residues from the sugar donor decaprenyl-phospho-arabinose (DPA) to the arabinan domain to form terminal beta-(1-&gt;2)-linked Araf residues, which marks the end point for AG arabinan biosynthesis before decoration with mycolic acids.</text>
</comment>
<comment type="pathway">
    <text>Cell wall biogenesis; cell wall polysaccharide biosynthesis.</text>
</comment>
<comment type="subcellular location">
    <subcellularLocation>
        <location evidence="3">Membrane</location>
        <topology evidence="3">Multi-pass membrane protein</topology>
    </subcellularLocation>
</comment>
<comment type="similarity">
    <text evidence="3">Belongs to the AftB family.</text>
</comment>
<sequence length="627" mass="68710">MVRVSLWLSVTAVAVLFGWGSWQRRWIADDGLIVLRTVRNLLAGNGPVFNQGERVEANTSTAWTYLLYVGGWVGGPMRLEYVALALAMVLSLLGMVLLMLGTGRLYAPSLRGRRAIMLPAGALVYIAVPPARDFATSGLESGLVLAYLGLLWWMMVCWSQPLRARPDSQMFLGALAFVAGCSVLVRPEFALIGGLALIMMLIAARTWRRRVLIVLAGGFLPVAYQIFRMGYYGLLVPSTALAKDAAGDKWSQGMIYVSNFNRPYALWVPLVLSVPLGLLLMTARRRPSFLRPVLAPDYGRVARAVQSPPAVVAFIVGSGVLQALYWIRQGGDFMHGRVLLAPLFCLLAPVGVIPILLPDGKDFSRETGRWLVGALSGLWLGIAGWSLWAANSPGMGDDATRVTYSGIVDERRFYAQATGHAHPLTAADYLDYPRMAAVLTALNNTPEGALLLPSGNYNQWDLVPMIRPSSGTAPGGKPAPKPQHAVFFTNMGMLGMNVGLDVRVIDQIGLVNPLAAHTERLKHARIGHDKNLFPDWVIADGPWVKWYPGIPGYIDQQWVTQAEAALQCPATRAVLNSVRAPITLHRFLSNVLHSYEFTRYRIDRVPRYELVRCGLDVPDGPGPPPRE</sequence>
<reference key="1">
    <citation type="journal article" date="1998" name="Nature">
        <title>Deciphering the biology of Mycobacterium tuberculosis from the complete genome sequence.</title>
        <authorList>
            <person name="Cole S.T."/>
            <person name="Brosch R."/>
            <person name="Parkhill J."/>
            <person name="Garnier T."/>
            <person name="Churcher C.M."/>
            <person name="Harris D.E."/>
            <person name="Gordon S.V."/>
            <person name="Eiglmeier K."/>
            <person name="Gas S."/>
            <person name="Barry C.E. III"/>
            <person name="Tekaia F."/>
            <person name="Badcock K."/>
            <person name="Basham D."/>
            <person name="Brown D."/>
            <person name="Chillingworth T."/>
            <person name="Connor R."/>
            <person name="Davies R.M."/>
            <person name="Devlin K."/>
            <person name="Feltwell T."/>
            <person name="Gentles S."/>
            <person name="Hamlin N."/>
            <person name="Holroyd S."/>
            <person name="Hornsby T."/>
            <person name="Jagels K."/>
            <person name="Krogh A."/>
            <person name="McLean J."/>
            <person name="Moule S."/>
            <person name="Murphy L.D."/>
            <person name="Oliver S."/>
            <person name="Osborne J."/>
            <person name="Quail M.A."/>
            <person name="Rajandream M.A."/>
            <person name="Rogers J."/>
            <person name="Rutter S."/>
            <person name="Seeger K."/>
            <person name="Skelton S."/>
            <person name="Squares S."/>
            <person name="Squares R."/>
            <person name="Sulston J.E."/>
            <person name="Taylor K."/>
            <person name="Whitehead S."/>
            <person name="Barrell B.G."/>
        </authorList>
    </citation>
    <scope>NUCLEOTIDE SEQUENCE [LARGE SCALE GENOMIC DNA]</scope>
    <source>
        <strain>ATCC 25618 / H37Rv</strain>
    </source>
</reference>
<reference key="2">
    <citation type="journal article" date="2007" name="J. Biol. Chem.">
        <title>Identification of a novel arabinofuranosyltransferase AftB involved in a terminal step of cell wall arabinan biosynthesis in Corynebacterianeae, such as Corynebacterium glutamicum and Mycobacterium tuberculosis.</title>
        <authorList>
            <person name="Seidel M."/>
            <person name="Alderwick L.J."/>
            <person name="Birch H.L."/>
            <person name="Sahm H."/>
            <person name="Eggeling L."/>
            <person name="Besra G.S."/>
        </authorList>
    </citation>
    <scope>FUNCTION</scope>
    <scope>NOMENCLATURE</scope>
</reference>
<reference key="3">
    <citation type="journal article" date="2011" name="Mol. Cell. Proteomics">
        <title>Proteogenomic analysis of Mycobacterium tuberculosis by high resolution mass spectrometry.</title>
        <authorList>
            <person name="Kelkar D.S."/>
            <person name="Kumar D."/>
            <person name="Kumar P."/>
            <person name="Balakrishnan L."/>
            <person name="Muthusamy B."/>
            <person name="Yadav A.K."/>
            <person name="Shrivastava P."/>
            <person name="Marimuthu A."/>
            <person name="Anand S."/>
            <person name="Sundaram H."/>
            <person name="Kingsbury R."/>
            <person name="Harsha H.C."/>
            <person name="Nair B."/>
            <person name="Prasad T.S."/>
            <person name="Chauhan D.S."/>
            <person name="Katoch K."/>
            <person name="Katoch V.M."/>
            <person name="Kumar P."/>
            <person name="Chaerkady R."/>
            <person name="Ramachandran S."/>
            <person name="Dash D."/>
            <person name="Pandey A."/>
        </authorList>
    </citation>
    <scope>IDENTIFICATION BY MASS SPECTROMETRY [LARGE SCALE ANALYSIS]</scope>
    <source>
        <strain>ATCC 25618 / H37Rv</strain>
    </source>
</reference>
<name>AFTB_MYCTU</name>
<keyword id="KW-0961">Cell wall biogenesis/degradation</keyword>
<keyword id="KW-0328">Glycosyltransferase</keyword>
<keyword id="KW-0472">Membrane</keyword>
<keyword id="KW-1185">Reference proteome</keyword>
<keyword id="KW-0732">Signal</keyword>
<keyword id="KW-0808">Transferase</keyword>
<keyword id="KW-0812">Transmembrane</keyword>
<keyword id="KW-1133">Transmembrane helix</keyword>
<gene>
    <name type="primary">aftB</name>
    <name type="ordered locus">Rv3805c</name>
</gene>
<dbReference type="EC" id="2.4.2.-"/>
<dbReference type="EMBL" id="AL123456">
    <property type="protein sequence ID" value="CCP46634.1"/>
    <property type="molecule type" value="Genomic_DNA"/>
</dbReference>
<dbReference type="PIR" id="A70888">
    <property type="entry name" value="A70888"/>
</dbReference>
<dbReference type="RefSeq" id="NP_218322.1">
    <property type="nucleotide sequence ID" value="NC_000962.3"/>
</dbReference>
<dbReference type="RefSeq" id="WP_003420786.1">
    <property type="nucleotide sequence ID" value="NC_000962.3"/>
</dbReference>
<dbReference type="FunCoup" id="O53582">
    <property type="interactions" value="23"/>
</dbReference>
<dbReference type="STRING" id="83332.Rv3805c"/>
<dbReference type="PaxDb" id="83332-Rv3805c"/>
<dbReference type="DNASU" id="886138"/>
<dbReference type="GeneID" id="886138"/>
<dbReference type="KEGG" id="mtu:Rv3805c"/>
<dbReference type="KEGG" id="mtv:RVBD_3805c"/>
<dbReference type="PATRIC" id="fig|83332.111.peg.4230"/>
<dbReference type="TubercuList" id="Rv3805c"/>
<dbReference type="eggNOG" id="COG1807">
    <property type="taxonomic scope" value="Bacteria"/>
</dbReference>
<dbReference type="InParanoid" id="O53582"/>
<dbReference type="OrthoDB" id="3721873at2"/>
<dbReference type="PhylomeDB" id="O53582"/>
<dbReference type="BioCyc" id="MetaCyc:G185E-8101-MONOMER"/>
<dbReference type="UniPathway" id="UPA00963"/>
<dbReference type="Proteomes" id="UP000001584">
    <property type="component" value="Chromosome"/>
</dbReference>
<dbReference type="GO" id="GO:0016020">
    <property type="term" value="C:membrane"/>
    <property type="evidence" value="ECO:0007669"/>
    <property type="project" value="UniProtKB-SubCell"/>
</dbReference>
<dbReference type="GO" id="GO:0016757">
    <property type="term" value="F:glycosyltransferase activity"/>
    <property type="evidence" value="ECO:0007669"/>
    <property type="project" value="UniProtKB-KW"/>
</dbReference>
<dbReference type="GO" id="GO:0045227">
    <property type="term" value="P:capsule polysaccharide biosynthetic process"/>
    <property type="evidence" value="ECO:0007669"/>
    <property type="project" value="UniProtKB-UniPathway"/>
</dbReference>
<dbReference type="GO" id="GO:0071555">
    <property type="term" value="P:cell wall organization"/>
    <property type="evidence" value="ECO:0007669"/>
    <property type="project" value="UniProtKB-KW"/>
</dbReference>
<dbReference type="InterPro" id="IPR048243">
    <property type="entry name" value="AftB-like"/>
</dbReference>
<dbReference type="InterPro" id="IPR048218">
    <property type="entry name" value="AftB-like_mycobacteriaceae"/>
</dbReference>
<dbReference type="NCBIfam" id="NF041481">
    <property type="entry name" value="beta_arabfuran_tase"/>
    <property type="match status" value="1"/>
</dbReference>
<dbReference type="NCBIfam" id="NF041480">
    <property type="entry name" value="flag_mot_ctl_ZomB"/>
    <property type="match status" value="1"/>
</dbReference>
<feature type="signal peptide" evidence="1">
    <location>
        <begin position="1"/>
        <end position="28"/>
    </location>
</feature>
<feature type="chain" id="PRO_0000420577" description="Terminal beta-(1-&gt;2)-arabinofuranosyltransferase">
    <location>
        <begin position="29"/>
        <end position="627"/>
    </location>
</feature>
<feature type="transmembrane region" description="Helical" evidence="1">
    <location>
        <begin position="81"/>
        <end position="101"/>
    </location>
</feature>
<feature type="transmembrane region" description="Helical" evidence="1">
    <location>
        <begin position="115"/>
        <end position="135"/>
    </location>
</feature>
<feature type="transmembrane region" description="Helical" evidence="1">
    <location>
        <begin position="138"/>
        <end position="158"/>
    </location>
</feature>
<feature type="transmembrane region" description="Helical" evidence="1">
    <location>
        <begin position="183"/>
        <end position="203"/>
    </location>
</feature>
<feature type="transmembrane region" description="Helical" evidence="1">
    <location>
        <begin position="211"/>
        <end position="231"/>
    </location>
</feature>
<feature type="transmembrane region" description="Helical" evidence="1">
    <location>
        <begin position="263"/>
        <end position="283"/>
    </location>
</feature>
<feature type="transmembrane region" description="Helical" evidence="1">
    <location>
        <begin position="307"/>
        <end position="327"/>
    </location>
</feature>
<feature type="transmembrane region" description="Helical" evidence="1">
    <location>
        <begin position="338"/>
        <end position="358"/>
    </location>
</feature>
<feature type="transmembrane region" description="Helical" evidence="1">
    <location>
        <begin position="370"/>
        <end position="390"/>
    </location>
</feature>